<dbReference type="EC" id="2.7.4.22" evidence="1"/>
<dbReference type="EMBL" id="CP000260">
    <property type="protein sequence ID" value="ABF33445.1"/>
    <property type="molecule type" value="Genomic_DNA"/>
</dbReference>
<dbReference type="SMR" id="Q1JI78"/>
<dbReference type="KEGG" id="sph:MGAS10270_Spy0380"/>
<dbReference type="HOGENOM" id="CLU_033861_0_0_9"/>
<dbReference type="UniPathway" id="UPA00159">
    <property type="reaction ID" value="UER00275"/>
</dbReference>
<dbReference type="Proteomes" id="UP000002436">
    <property type="component" value="Chromosome"/>
</dbReference>
<dbReference type="GO" id="GO:0005737">
    <property type="term" value="C:cytoplasm"/>
    <property type="evidence" value="ECO:0007669"/>
    <property type="project" value="UniProtKB-SubCell"/>
</dbReference>
<dbReference type="GO" id="GO:0005524">
    <property type="term" value="F:ATP binding"/>
    <property type="evidence" value="ECO:0007669"/>
    <property type="project" value="UniProtKB-KW"/>
</dbReference>
<dbReference type="GO" id="GO:0033862">
    <property type="term" value="F:UMP kinase activity"/>
    <property type="evidence" value="ECO:0007669"/>
    <property type="project" value="UniProtKB-EC"/>
</dbReference>
<dbReference type="GO" id="GO:0044210">
    <property type="term" value="P:'de novo' CTP biosynthetic process"/>
    <property type="evidence" value="ECO:0007669"/>
    <property type="project" value="UniProtKB-UniRule"/>
</dbReference>
<dbReference type="GO" id="GO:0006225">
    <property type="term" value="P:UDP biosynthetic process"/>
    <property type="evidence" value="ECO:0007669"/>
    <property type="project" value="TreeGrafter"/>
</dbReference>
<dbReference type="CDD" id="cd04254">
    <property type="entry name" value="AAK_UMPK-PyrH-Ec"/>
    <property type="match status" value="1"/>
</dbReference>
<dbReference type="FunFam" id="3.40.1160.10:FF:000019">
    <property type="entry name" value="Uridylate kinase"/>
    <property type="match status" value="1"/>
</dbReference>
<dbReference type="Gene3D" id="3.40.1160.10">
    <property type="entry name" value="Acetylglutamate kinase-like"/>
    <property type="match status" value="1"/>
</dbReference>
<dbReference type="HAMAP" id="MF_01220_B">
    <property type="entry name" value="PyrH_B"/>
    <property type="match status" value="1"/>
</dbReference>
<dbReference type="InterPro" id="IPR036393">
    <property type="entry name" value="AceGlu_kinase-like_sf"/>
</dbReference>
<dbReference type="InterPro" id="IPR001048">
    <property type="entry name" value="Asp/Glu/Uridylate_kinase"/>
</dbReference>
<dbReference type="InterPro" id="IPR011817">
    <property type="entry name" value="Uridylate_kinase"/>
</dbReference>
<dbReference type="InterPro" id="IPR015963">
    <property type="entry name" value="Uridylate_kinase_bac"/>
</dbReference>
<dbReference type="NCBIfam" id="TIGR02075">
    <property type="entry name" value="pyrH_bact"/>
    <property type="match status" value="1"/>
</dbReference>
<dbReference type="PANTHER" id="PTHR42833">
    <property type="entry name" value="URIDYLATE KINASE"/>
    <property type="match status" value="1"/>
</dbReference>
<dbReference type="PANTHER" id="PTHR42833:SF4">
    <property type="entry name" value="URIDYLATE KINASE PUMPKIN, CHLOROPLASTIC"/>
    <property type="match status" value="1"/>
</dbReference>
<dbReference type="Pfam" id="PF00696">
    <property type="entry name" value="AA_kinase"/>
    <property type="match status" value="1"/>
</dbReference>
<dbReference type="PIRSF" id="PIRSF005650">
    <property type="entry name" value="Uridylate_kin"/>
    <property type="match status" value="1"/>
</dbReference>
<dbReference type="SUPFAM" id="SSF53633">
    <property type="entry name" value="Carbamate kinase-like"/>
    <property type="match status" value="1"/>
</dbReference>
<feature type="chain" id="PRO_1000054034" description="Uridylate kinase">
    <location>
        <begin position="1"/>
        <end position="242"/>
    </location>
</feature>
<feature type="region of interest" description="Involved in allosteric activation by GTP" evidence="1">
    <location>
        <begin position="19"/>
        <end position="24"/>
    </location>
</feature>
<feature type="binding site" evidence="1">
    <location>
        <begin position="11"/>
        <end position="14"/>
    </location>
    <ligand>
        <name>ATP</name>
        <dbReference type="ChEBI" id="CHEBI:30616"/>
    </ligand>
</feature>
<feature type="binding site" evidence="1">
    <location>
        <position position="53"/>
    </location>
    <ligand>
        <name>UMP</name>
        <dbReference type="ChEBI" id="CHEBI:57865"/>
    </ligand>
</feature>
<feature type="binding site" evidence="1">
    <location>
        <position position="54"/>
    </location>
    <ligand>
        <name>ATP</name>
        <dbReference type="ChEBI" id="CHEBI:30616"/>
    </ligand>
</feature>
<feature type="binding site" evidence="1">
    <location>
        <position position="58"/>
    </location>
    <ligand>
        <name>ATP</name>
        <dbReference type="ChEBI" id="CHEBI:30616"/>
    </ligand>
</feature>
<feature type="binding site" evidence="1">
    <location>
        <position position="73"/>
    </location>
    <ligand>
        <name>UMP</name>
        <dbReference type="ChEBI" id="CHEBI:57865"/>
    </ligand>
</feature>
<feature type="binding site" evidence="1">
    <location>
        <begin position="134"/>
        <end position="141"/>
    </location>
    <ligand>
        <name>UMP</name>
        <dbReference type="ChEBI" id="CHEBI:57865"/>
    </ligand>
</feature>
<feature type="binding site" evidence="1">
    <location>
        <position position="162"/>
    </location>
    <ligand>
        <name>ATP</name>
        <dbReference type="ChEBI" id="CHEBI:30616"/>
    </ligand>
</feature>
<feature type="binding site" evidence="1">
    <location>
        <position position="168"/>
    </location>
    <ligand>
        <name>ATP</name>
        <dbReference type="ChEBI" id="CHEBI:30616"/>
    </ligand>
</feature>
<feature type="binding site" evidence="1">
    <location>
        <position position="171"/>
    </location>
    <ligand>
        <name>ATP</name>
        <dbReference type="ChEBI" id="CHEBI:30616"/>
    </ligand>
</feature>
<evidence type="ECO:0000255" key="1">
    <source>
        <dbReference type="HAMAP-Rule" id="MF_01220"/>
    </source>
</evidence>
<keyword id="KW-0021">Allosteric enzyme</keyword>
<keyword id="KW-0067">ATP-binding</keyword>
<keyword id="KW-0963">Cytoplasm</keyword>
<keyword id="KW-0418">Kinase</keyword>
<keyword id="KW-0547">Nucleotide-binding</keyword>
<keyword id="KW-0665">Pyrimidine biosynthesis</keyword>
<keyword id="KW-0808">Transferase</keyword>
<reference key="1">
    <citation type="journal article" date="2006" name="Proc. Natl. Acad. Sci. U.S.A.">
        <title>Molecular genetic anatomy of inter- and intraserotype variation in the human bacterial pathogen group A Streptococcus.</title>
        <authorList>
            <person name="Beres S.B."/>
            <person name="Richter E.W."/>
            <person name="Nagiec M.J."/>
            <person name="Sumby P."/>
            <person name="Porcella S.F."/>
            <person name="DeLeo F.R."/>
            <person name="Musser J.M."/>
        </authorList>
    </citation>
    <scope>NUCLEOTIDE SEQUENCE [LARGE SCALE GENOMIC DNA]</scope>
    <source>
        <strain>MGAS10270</strain>
    </source>
</reference>
<protein>
    <recommendedName>
        <fullName evidence="1">Uridylate kinase</fullName>
        <shortName evidence="1">UK</shortName>
        <ecNumber evidence="1">2.7.4.22</ecNumber>
    </recommendedName>
    <alternativeName>
        <fullName evidence="1">Uridine monophosphate kinase</fullName>
        <shortName evidence="1">UMP kinase</shortName>
        <shortName evidence="1">UMPK</shortName>
    </alternativeName>
</protein>
<organism>
    <name type="scientific">Streptococcus pyogenes serotype M2 (strain MGAS10270)</name>
    <dbReference type="NCBI Taxonomy" id="370552"/>
    <lineage>
        <taxon>Bacteria</taxon>
        <taxon>Bacillati</taxon>
        <taxon>Bacillota</taxon>
        <taxon>Bacilli</taxon>
        <taxon>Lactobacillales</taxon>
        <taxon>Streptococcaceae</taxon>
        <taxon>Streptococcus</taxon>
    </lineage>
</organism>
<name>PYRH_STRPD</name>
<accession>Q1JI78</accession>
<gene>
    <name evidence="1" type="primary">pyrH</name>
    <name type="ordered locus">MGAS10270_Spy0380</name>
</gene>
<comment type="function">
    <text evidence="1">Catalyzes the reversible phosphorylation of UMP to UDP.</text>
</comment>
<comment type="catalytic activity">
    <reaction evidence="1">
        <text>UMP + ATP = UDP + ADP</text>
        <dbReference type="Rhea" id="RHEA:24400"/>
        <dbReference type="ChEBI" id="CHEBI:30616"/>
        <dbReference type="ChEBI" id="CHEBI:57865"/>
        <dbReference type="ChEBI" id="CHEBI:58223"/>
        <dbReference type="ChEBI" id="CHEBI:456216"/>
        <dbReference type="EC" id="2.7.4.22"/>
    </reaction>
</comment>
<comment type="activity regulation">
    <text evidence="1">Allosterically activated by GTP. Inhibited by UTP.</text>
</comment>
<comment type="pathway">
    <text evidence="1">Pyrimidine metabolism; CTP biosynthesis via de novo pathway; UDP from UMP (UMPK route): step 1/1.</text>
</comment>
<comment type="subunit">
    <text evidence="1">Homohexamer.</text>
</comment>
<comment type="subcellular location">
    <subcellularLocation>
        <location evidence="1">Cytoplasm</location>
    </subcellularLocation>
</comment>
<comment type="similarity">
    <text evidence="1">Belongs to the UMP kinase family.</text>
</comment>
<sequence length="242" mass="25868">MEPKYQRILIKLSGEALAGEKGAGIDIPTVQAIAKEIAEVHVSGVQIALVIGGGNLWRGEPAADAGMDRVQADYTGMLGTVMNALVMADSLQHYGVDTRVQTAIPMQNVAEPYIRGRALRHLEKNRIVVFGAGIGSPYFSTDTTAALRAAEIEADAILMAKNGVDGVYNADPKKDANAVKFDELTHGEVIKRGLKIMDATASTLSMDNDIDLVVFNMNEAGNIQRVVFGEHIGTTVSNKVCD</sequence>
<proteinExistence type="inferred from homology"/>